<keyword id="KW-0025">Alternative splicing</keyword>
<keyword id="KW-0472">Membrane</keyword>
<keyword id="KW-1267">Proteomics identification</keyword>
<keyword id="KW-1185">Reference proteome</keyword>
<keyword id="KW-0812">Transmembrane</keyword>
<keyword id="KW-1133">Transmembrane helix</keyword>
<name>S35E4_HUMAN</name>
<gene>
    <name type="primary">SLC35E4</name>
</gene>
<sequence length="350" mass="36747">MCRCPPEHHDGRMTSAEVGAAAGGAQAAGPPEWPPGSPQALRQPGRARVAMAALVWLLAGASMSSLNKWIFTVHGFGRPLLLSALHMLVAALACHRGARRPMPGGTRCRVLLLSLTFGTSMACGNVGLRAVPLDLAQLVTTTTPLFTLALSALLLGRRHHPLQLAAMGPLCLGAACSLAGEFRTPPTGCGFLLAATCLRGLKSVQQSALLQEERLDAVTLLYATSLPSFCLLAGAALVLEAGVAPPPTAGDSRLWACILLSCLLSVLYNLASFSLLALTSALTVHVLGNLTVVGNLILSRLLFGSRLSALSYVGIALTLSGMFLYHNCEFVASWAARRGLWRRDQPSKGL</sequence>
<comment type="function">
    <text evidence="1">Putative transporter.</text>
</comment>
<comment type="interaction">
    <interactant intactId="EBI-12867720">
        <id>Q6ICL7</id>
    </interactant>
    <interactant intactId="EBI-13059134">
        <id>Q13520</id>
        <label>AQP6</label>
    </interactant>
    <organismsDiffer>false</organismsDiffer>
    <experiments>3</experiments>
</comment>
<comment type="interaction">
    <interactant intactId="EBI-12867720">
        <id>Q6ICL7</id>
    </interactant>
    <interactant intactId="EBI-2835940">
        <id>P34972</id>
        <label>CNR2</label>
    </interactant>
    <organismsDiffer>false</organismsDiffer>
    <experiments>3</experiments>
</comment>
<comment type="interaction">
    <interactant intactId="EBI-12867720">
        <id>Q6ICL7</id>
    </interactant>
    <interactant intactId="EBI-17935713">
        <id>Q96P66</id>
        <label>GPR101</label>
    </interactant>
    <organismsDiffer>false</organismsDiffer>
    <experiments>3</experiments>
</comment>
<comment type="interaction">
    <interactant intactId="EBI-12867720">
        <id>Q6ICL7</id>
    </interactant>
    <interactant intactId="EBI-18076404">
        <id>O15529</id>
        <label>GPR42</label>
    </interactant>
    <organismsDiffer>false</organismsDiffer>
    <experiments>3</experiments>
</comment>
<comment type="interaction">
    <interactant intactId="EBI-12867720">
        <id>Q6ICL7</id>
    </interactant>
    <interactant intactId="EBI-18053395">
        <id>Q7Z5P4</id>
        <label>HSD17B13</label>
    </interactant>
    <organismsDiffer>false</organismsDiffer>
    <experiments>3</experiments>
</comment>
<comment type="interaction">
    <interactant intactId="EBI-12867720">
        <id>Q6ICL7</id>
    </interactant>
    <interactant intactId="EBI-6163737">
        <id>Q8N4V1</id>
        <label>MMGT1</label>
    </interactant>
    <organismsDiffer>false</organismsDiffer>
    <experiments>3</experiments>
</comment>
<comment type="interaction">
    <interactant intactId="EBI-12867720">
        <id>Q6ICL7</id>
    </interactant>
    <interactant intactId="EBI-17263240">
        <id>P15941-11</id>
        <label>MUC1</label>
    </interactant>
    <organismsDiffer>false</organismsDiffer>
    <experiments>3</experiments>
</comment>
<comment type="interaction">
    <interactant intactId="EBI-12867720">
        <id>Q6ICL7</id>
    </interactant>
    <interactant intactId="EBI-17247926">
        <id>Q9NY72</id>
        <label>SCN3B</label>
    </interactant>
    <organismsDiffer>false</organismsDiffer>
    <experiments>3</experiments>
</comment>
<comment type="interaction">
    <interactant intactId="EBI-12867720">
        <id>Q6ICL7</id>
    </interactant>
    <interactant intactId="EBI-3923031">
        <id>Q14973</id>
        <label>SLC10A1</label>
    </interactant>
    <organismsDiffer>false</organismsDiffer>
    <experiments>3</experiments>
</comment>
<comment type="interaction">
    <interactant intactId="EBI-12867720">
        <id>Q6ICL7</id>
    </interactant>
    <interactant intactId="EBI-12808018">
        <id>Q9UKG4</id>
        <label>SLC13A4</label>
    </interactant>
    <organismsDiffer>false</organismsDiffer>
    <experiments>3</experiments>
</comment>
<comment type="interaction">
    <interactant intactId="EBI-12867720">
        <id>Q6ICL7</id>
    </interactant>
    <interactant intactId="EBI-6268651">
        <id>Q9NPL8</id>
        <label>TIMMDC1</label>
    </interactant>
    <organismsDiffer>false</organismsDiffer>
    <experiments>3</experiments>
</comment>
<comment type="interaction">
    <interactant intactId="EBI-12867720">
        <id>Q6ICL7</id>
    </interactant>
    <interactant intactId="EBI-8638294">
        <id>Q9NUH8</id>
        <label>TMEM14B</label>
    </interactant>
    <organismsDiffer>false</organismsDiffer>
    <experiments>3</experiments>
</comment>
<comment type="interaction">
    <interactant intactId="EBI-12867720">
        <id>Q6ICL7</id>
    </interactant>
    <interactant intactId="EBI-10982110">
        <id>Q96Q45-2</id>
        <label>TMEM237</label>
    </interactant>
    <organismsDiffer>false</organismsDiffer>
    <experiments>3</experiments>
</comment>
<comment type="interaction">
    <interactant intactId="EBI-12867720">
        <id>Q6ICL7</id>
    </interactant>
    <interactant intactId="EBI-13356252">
        <id>Q86WB7-2</id>
        <label>UNC93A</label>
    </interactant>
    <organismsDiffer>false</organismsDiffer>
    <experiments>3</experiments>
</comment>
<comment type="interaction">
    <interactant intactId="EBI-12867720">
        <id>Q6ICL7</id>
    </interactant>
    <interactant intactId="EBI-1055364">
        <id>Q3ZAQ7</id>
        <label>VMA21</label>
    </interactant>
    <organismsDiffer>false</organismsDiffer>
    <experiments>3</experiments>
</comment>
<comment type="subcellular location">
    <subcellularLocation>
        <location evidence="5">Membrane</location>
        <topology evidence="5">Multi-pass membrane protein</topology>
    </subcellularLocation>
</comment>
<comment type="alternative products">
    <event type="alternative splicing"/>
    <isoform>
        <id>Q6ICL7-1</id>
        <name>1</name>
        <sequence type="displayed"/>
    </isoform>
    <isoform>
        <id>Q6ICL7-2</id>
        <name>2</name>
        <sequence type="described" ref="VSP_027480 VSP_027481"/>
    </isoform>
</comment>
<comment type="similarity">
    <text evidence="5">Belongs to the TPT transporter family. SLC35E subfamily.</text>
</comment>
<dbReference type="EMBL" id="CR456351">
    <property type="protein sequence ID" value="CAG30237.1"/>
    <property type="molecule type" value="mRNA"/>
</dbReference>
<dbReference type="EMBL" id="BC040191">
    <property type="protein sequence ID" value="AAH40191.1"/>
    <property type="molecule type" value="mRNA"/>
</dbReference>
<dbReference type="EMBL" id="BC093099">
    <property type="protein sequence ID" value="AAH93099.1"/>
    <property type="molecule type" value="mRNA"/>
</dbReference>
<dbReference type="EMBL" id="BC107119">
    <property type="protein sequence ID" value="AAI07120.1"/>
    <property type="molecule type" value="mRNA"/>
</dbReference>
<dbReference type="CCDS" id="CCDS13882.1">
    <molecule id="Q6ICL7-1"/>
</dbReference>
<dbReference type="CCDS" id="CCDS82708.1">
    <molecule id="Q6ICL7-2"/>
</dbReference>
<dbReference type="RefSeq" id="NP_001001479.1">
    <molecule id="Q6ICL7-1"/>
    <property type="nucleotide sequence ID" value="NM_001001479.4"/>
</dbReference>
<dbReference type="RefSeq" id="NP_001305299.1">
    <molecule id="Q6ICL7-2"/>
    <property type="nucleotide sequence ID" value="NM_001318370.2"/>
</dbReference>
<dbReference type="RefSeq" id="NP_001305300.1">
    <property type="nucleotide sequence ID" value="NM_001318371.1"/>
</dbReference>
<dbReference type="RefSeq" id="XP_016884283.1">
    <property type="nucleotide sequence ID" value="XM_017028794.1"/>
</dbReference>
<dbReference type="RefSeq" id="XP_016884284.1">
    <property type="nucleotide sequence ID" value="XM_017028795.1"/>
</dbReference>
<dbReference type="RefSeq" id="XP_054181568.1">
    <molecule id="Q6ICL7-1"/>
    <property type="nucleotide sequence ID" value="XM_054325593.1"/>
</dbReference>
<dbReference type="RefSeq" id="XP_054181569.1">
    <molecule id="Q6ICL7-1"/>
    <property type="nucleotide sequence ID" value="XM_054325594.1"/>
</dbReference>
<dbReference type="SMR" id="Q6ICL7"/>
<dbReference type="BioGRID" id="130914">
    <property type="interactions" value="17"/>
</dbReference>
<dbReference type="FunCoup" id="Q6ICL7">
    <property type="interactions" value="232"/>
</dbReference>
<dbReference type="IntAct" id="Q6ICL7">
    <property type="interactions" value="15"/>
</dbReference>
<dbReference type="STRING" id="9606.ENSP00000339626"/>
<dbReference type="TCDB" id="2.A.7.9.11">
    <property type="family name" value="the drug/metabolite transporter (dmt) superfamily"/>
</dbReference>
<dbReference type="GlyGen" id="Q6ICL7">
    <property type="glycosylation" value="1 site"/>
</dbReference>
<dbReference type="iPTMnet" id="Q6ICL7"/>
<dbReference type="PhosphoSitePlus" id="Q6ICL7"/>
<dbReference type="BioMuta" id="SLC35E4"/>
<dbReference type="DMDM" id="74748762"/>
<dbReference type="MassIVE" id="Q6ICL7"/>
<dbReference type="PaxDb" id="9606-ENSP00000339626"/>
<dbReference type="PeptideAtlas" id="Q6ICL7"/>
<dbReference type="ProteomicsDB" id="66400">
    <molecule id="Q6ICL7-1"/>
</dbReference>
<dbReference type="Antibodypedia" id="62513">
    <property type="antibodies" value="19 antibodies from 10 providers"/>
</dbReference>
<dbReference type="DNASU" id="339665"/>
<dbReference type="Ensembl" id="ENST00000343605.5">
    <molecule id="Q6ICL7-1"/>
    <property type="protein sequence ID" value="ENSP00000339626.4"/>
    <property type="gene ID" value="ENSG00000100036.13"/>
</dbReference>
<dbReference type="Ensembl" id="ENST00000406566.1">
    <molecule id="Q6ICL7-2"/>
    <property type="protein sequence ID" value="ENSP00000384377.1"/>
    <property type="gene ID" value="ENSG00000100036.13"/>
</dbReference>
<dbReference type="GeneID" id="339665"/>
<dbReference type="KEGG" id="hsa:339665"/>
<dbReference type="MANE-Select" id="ENST00000343605.5">
    <property type="protein sequence ID" value="ENSP00000339626.4"/>
    <property type="RefSeq nucleotide sequence ID" value="NM_001001479.4"/>
    <property type="RefSeq protein sequence ID" value="NP_001001479.1"/>
</dbReference>
<dbReference type="UCSC" id="uc003ais.2">
    <molecule id="Q6ICL7-1"/>
    <property type="organism name" value="human"/>
</dbReference>
<dbReference type="AGR" id="HGNC:17058"/>
<dbReference type="CTD" id="339665"/>
<dbReference type="DisGeNET" id="339665"/>
<dbReference type="GeneCards" id="SLC35E4"/>
<dbReference type="HGNC" id="HGNC:17058">
    <property type="gene designation" value="SLC35E4"/>
</dbReference>
<dbReference type="HPA" id="ENSG00000100036">
    <property type="expression patterns" value="Tissue enhanced (testis)"/>
</dbReference>
<dbReference type="neXtProt" id="NX_Q6ICL7"/>
<dbReference type="OpenTargets" id="ENSG00000100036"/>
<dbReference type="PharmGKB" id="PA134883803"/>
<dbReference type="VEuPathDB" id="HostDB:ENSG00000100036"/>
<dbReference type="eggNOG" id="KOG1441">
    <property type="taxonomic scope" value="Eukaryota"/>
</dbReference>
<dbReference type="GeneTree" id="ENSGT00730000111291"/>
<dbReference type="HOGENOM" id="CLU_022332_2_0_1"/>
<dbReference type="InParanoid" id="Q6ICL7"/>
<dbReference type="OMA" id="MAGLNKW"/>
<dbReference type="OrthoDB" id="10261634at2759"/>
<dbReference type="PAN-GO" id="Q6ICL7">
    <property type="GO annotations" value="2 GO annotations based on evolutionary models"/>
</dbReference>
<dbReference type="PhylomeDB" id="Q6ICL7"/>
<dbReference type="TreeFam" id="TF328788"/>
<dbReference type="PathwayCommons" id="Q6ICL7"/>
<dbReference type="SignaLink" id="Q6ICL7"/>
<dbReference type="BioGRID-ORCS" id="339665">
    <property type="hits" value="13 hits in 1152 CRISPR screens"/>
</dbReference>
<dbReference type="ChiTaRS" id="SLC35E4">
    <property type="organism name" value="human"/>
</dbReference>
<dbReference type="GenomeRNAi" id="339665"/>
<dbReference type="Pharos" id="Q6ICL7">
    <property type="development level" value="Tdark"/>
</dbReference>
<dbReference type="PRO" id="PR:Q6ICL7"/>
<dbReference type="Proteomes" id="UP000005640">
    <property type="component" value="Chromosome 22"/>
</dbReference>
<dbReference type="RNAct" id="Q6ICL7">
    <property type="molecule type" value="protein"/>
</dbReference>
<dbReference type="Bgee" id="ENSG00000100036">
    <property type="expression patterns" value="Expressed in male germ line stem cell (sensu Vertebrata) in testis and 107 other cell types or tissues"/>
</dbReference>
<dbReference type="ExpressionAtlas" id="Q6ICL7">
    <property type="expression patterns" value="baseline and differential"/>
</dbReference>
<dbReference type="GO" id="GO:0005794">
    <property type="term" value="C:Golgi apparatus"/>
    <property type="evidence" value="ECO:0000318"/>
    <property type="project" value="GO_Central"/>
</dbReference>
<dbReference type="GO" id="GO:0016020">
    <property type="term" value="C:membrane"/>
    <property type="evidence" value="ECO:0007669"/>
    <property type="project" value="UniProtKB-SubCell"/>
</dbReference>
<dbReference type="GO" id="GO:0015297">
    <property type="term" value="F:antiporter activity"/>
    <property type="evidence" value="ECO:0000318"/>
    <property type="project" value="GO_Central"/>
</dbReference>
<dbReference type="GO" id="GO:0055085">
    <property type="term" value="P:transmembrane transport"/>
    <property type="evidence" value="ECO:0000318"/>
    <property type="project" value="GO_Central"/>
</dbReference>
<dbReference type="InterPro" id="IPR004853">
    <property type="entry name" value="Sugar_P_trans_dom"/>
</dbReference>
<dbReference type="InterPro" id="IPR050186">
    <property type="entry name" value="TPT_transporter"/>
</dbReference>
<dbReference type="PANTHER" id="PTHR11132">
    <property type="entry name" value="SOLUTE CARRIER FAMILY 35"/>
    <property type="match status" value="1"/>
</dbReference>
<dbReference type="Pfam" id="PF03151">
    <property type="entry name" value="TPT"/>
    <property type="match status" value="1"/>
</dbReference>
<dbReference type="SUPFAM" id="SSF103481">
    <property type="entry name" value="Multidrug resistance efflux transporter EmrE"/>
    <property type="match status" value="2"/>
</dbReference>
<reference key="1">
    <citation type="journal article" date="2004" name="Genome Biol.">
        <title>A genome annotation-driven approach to cloning the human ORFeome.</title>
        <authorList>
            <person name="Collins J.E."/>
            <person name="Wright C.L."/>
            <person name="Edwards C.A."/>
            <person name="Davis M.P."/>
            <person name="Grinham J.A."/>
            <person name="Cole C.G."/>
            <person name="Goward M.E."/>
            <person name="Aguado B."/>
            <person name="Mallya M."/>
            <person name="Mokrab Y."/>
            <person name="Huckle E.J."/>
            <person name="Beare D.M."/>
            <person name="Dunham I."/>
        </authorList>
    </citation>
    <scope>NUCLEOTIDE SEQUENCE [LARGE SCALE MRNA] (ISOFORM 1)</scope>
</reference>
<reference key="2">
    <citation type="journal article" date="2004" name="Genome Res.">
        <title>The status, quality, and expansion of the NIH full-length cDNA project: the Mammalian Gene Collection (MGC).</title>
        <authorList>
            <consortium name="The MGC Project Team"/>
        </authorList>
    </citation>
    <scope>NUCLEOTIDE SEQUENCE [LARGE SCALE MRNA] (ISOFORMS 1 AND 2)</scope>
    <source>
        <tissue>Brain</tissue>
    </source>
</reference>
<proteinExistence type="evidence at protein level"/>
<organism>
    <name type="scientific">Homo sapiens</name>
    <name type="common">Human</name>
    <dbReference type="NCBI Taxonomy" id="9606"/>
    <lineage>
        <taxon>Eukaryota</taxon>
        <taxon>Metazoa</taxon>
        <taxon>Chordata</taxon>
        <taxon>Craniata</taxon>
        <taxon>Vertebrata</taxon>
        <taxon>Euteleostomi</taxon>
        <taxon>Mammalia</taxon>
        <taxon>Eutheria</taxon>
        <taxon>Euarchontoglires</taxon>
        <taxon>Primates</taxon>
        <taxon>Haplorrhini</taxon>
        <taxon>Catarrhini</taxon>
        <taxon>Hominidae</taxon>
        <taxon>Homo</taxon>
    </lineage>
</organism>
<feature type="chain" id="PRO_0000298927" description="Solute carrier family 35 member E4">
    <location>
        <begin position="1"/>
        <end position="350"/>
    </location>
</feature>
<feature type="transmembrane region" description="Helical" evidence="2">
    <location>
        <begin position="51"/>
        <end position="71"/>
    </location>
</feature>
<feature type="transmembrane region" description="Helical" evidence="2">
    <location>
        <begin position="73"/>
        <end position="93"/>
    </location>
</feature>
<feature type="transmembrane region" description="Helical" evidence="2">
    <location>
        <begin position="110"/>
        <end position="132"/>
    </location>
</feature>
<feature type="transmembrane region" description="Helical" evidence="2">
    <location>
        <begin position="135"/>
        <end position="155"/>
    </location>
</feature>
<feature type="transmembrane region" description="Helical" evidence="2">
    <location>
        <begin position="218"/>
        <end position="238"/>
    </location>
</feature>
<feature type="transmembrane region" description="Helical" evidence="2">
    <location>
        <begin position="258"/>
        <end position="278"/>
    </location>
</feature>
<feature type="transmembrane region" description="Helical" evidence="2">
    <location>
        <begin position="279"/>
        <end position="299"/>
    </location>
</feature>
<feature type="transmembrane region" description="Helical" evidence="2">
    <location>
        <begin position="312"/>
        <end position="332"/>
    </location>
</feature>
<feature type="domain" description="EamA">
    <location>
        <begin position="125"/>
        <end position="179"/>
    </location>
</feature>
<feature type="region of interest" description="Disordered" evidence="3">
    <location>
        <begin position="19"/>
        <end position="42"/>
    </location>
</feature>
<feature type="compositionally biased region" description="Low complexity" evidence="3">
    <location>
        <begin position="19"/>
        <end position="30"/>
    </location>
</feature>
<feature type="splice variant" id="VSP_027480" description="In isoform 2." evidence="4">
    <original>ALLQEERLDAVTLLYATSLPSFCLLAG</original>
    <variation>LSFQICKMELMIPMERVRMRSAGQGQE</variation>
    <location>
        <begin position="208"/>
        <end position="234"/>
    </location>
</feature>
<feature type="splice variant" id="VSP_027481" description="In isoform 2." evidence="4">
    <location>
        <begin position="235"/>
        <end position="350"/>
    </location>
</feature>
<accession>Q6ICL7</accession>
<accession>Q567P0</accession>
<protein>
    <recommendedName>
        <fullName>Solute carrier family 35 member E4</fullName>
    </recommendedName>
</protein>
<evidence type="ECO:0000250" key="1"/>
<evidence type="ECO:0000255" key="2"/>
<evidence type="ECO:0000256" key="3">
    <source>
        <dbReference type="SAM" id="MobiDB-lite"/>
    </source>
</evidence>
<evidence type="ECO:0000303" key="4">
    <source>
    </source>
</evidence>
<evidence type="ECO:0000305" key="5"/>